<gene>
    <name type="primary">fipr-15</name>
    <name type="ORF">F13E9.3</name>
</gene>
<dbReference type="EMBL" id="Z69383">
    <property type="protein sequence ID" value="CAA93406.2"/>
    <property type="molecule type" value="Genomic_DNA"/>
</dbReference>
<dbReference type="PIR" id="T20841">
    <property type="entry name" value="T20841"/>
</dbReference>
<dbReference type="RefSeq" id="NP_502019.2">
    <property type="nucleotide sequence ID" value="NM_069618.2"/>
</dbReference>
<dbReference type="IntAct" id="Q19408">
    <property type="interactions" value="1"/>
</dbReference>
<dbReference type="STRING" id="6239.F13E9.3.1"/>
<dbReference type="PaxDb" id="6239-F13E9.3"/>
<dbReference type="EnsemblMetazoa" id="F13E9.3.1">
    <property type="protein sequence ID" value="F13E9.3.1"/>
    <property type="gene ID" value="WBGene00008752"/>
</dbReference>
<dbReference type="GeneID" id="184421"/>
<dbReference type="KEGG" id="cel:CELE_F13E9.3"/>
<dbReference type="AGR" id="WB:WBGene00008752"/>
<dbReference type="CTD" id="184421"/>
<dbReference type="WormBase" id="F13E9.3">
    <property type="protein sequence ID" value="CE40038"/>
    <property type="gene ID" value="WBGene00008752"/>
    <property type="gene designation" value="fipr-15"/>
</dbReference>
<dbReference type="HOGENOM" id="CLU_3126366_0_0_1"/>
<dbReference type="InParanoid" id="Q19408"/>
<dbReference type="PRO" id="PR:Q19408"/>
<dbReference type="Proteomes" id="UP000001940">
    <property type="component" value="Chromosome IV"/>
</dbReference>
<dbReference type="Bgee" id="WBGene00008752">
    <property type="expression patterns" value="Expressed in embryo"/>
</dbReference>
<dbReference type="GO" id="GO:0001666">
    <property type="term" value="P:response to hypoxia"/>
    <property type="evidence" value="ECO:0000270"/>
    <property type="project" value="UniProtKB"/>
</dbReference>
<dbReference type="InterPro" id="IPR052889">
    <property type="entry name" value="Celegans_Fungus-Induced_Rsp"/>
</dbReference>
<dbReference type="InterPro" id="IPR024415">
    <property type="entry name" value="Fungus-induced"/>
</dbReference>
<dbReference type="PANTHER" id="PTHR39380:SF2">
    <property type="entry name" value="FIP (FUNGUS-INDUCED PROTEIN) RELATED-RELATED"/>
    <property type="match status" value="1"/>
</dbReference>
<dbReference type="PANTHER" id="PTHR39380">
    <property type="entry name" value="FIP (FUNGUS-INDUCED PROTEIN) RELATED-RELATED-RELATED"/>
    <property type="match status" value="1"/>
</dbReference>
<dbReference type="Pfam" id="PF10917">
    <property type="entry name" value="Fungus-induced"/>
    <property type="match status" value="1"/>
</dbReference>
<name>FIR15_CAEEL</name>
<evidence type="ECO:0000255" key="1"/>
<evidence type="ECO:0000269" key="2">
    <source>
    </source>
</evidence>
<proteinExistence type="inferred from homology"/>
<comment type="function">
    <text evidence="2">May have role in hypoxia response.</text>
</comment>
<organism>
    <name type="scientific">Caenorhabditis elegans</name>
    <dbReference type="NCBI Taxonomy" id="6239"/>
    <lineage>
        <taxon>Eukaryota</taxon>
        <taxon>Metazoa</taxon>
        <taxon>Ecdysozoa</taxon>
        <taxon>Nematoda</taxon>
        <taxon>Chromadorea</taxon>
        <taxon>Rhabditida</taxon>
        <taxon>Rhabditina</taxon>
        <taxon>Rhabditomorpha</taxon>
        <taxon>Rhabditoidea</taxon>
        <taxon>Rhabditidae</taxon>
        <taxon>Peloderinae</taxon>
        <taxon>Caenorhabditis</taxon>
    </lineage>
</organism>
<feature type="signal peptide" evidence="1">
    <location>
        <begin position="1"/>
        <end position="21"/>
    </location>
</feature>
<feature type="chain" id="PRO_0000003477" description="Fungus-induced-related protein 15">
    <location>
        <begin position="22"/>
        <end position="50"/>
    </location>
</feature>
<keyword id="KW-1185">Reference proteome</keyword>
<keyword id="KW-0732">Signal</keyword>
<sequence length="50" mass="5370">MNFYSLFVFIALIFSFNVVHGHRCHRGGNGGYGGGSGEVVVIGAEKPKDK</sequence>
<reference key="1">
    <citation type="journal article" date="1998" name="Science">
        <title>Genome sequence of the nematode C. elegans: a platform for investigating biology.</title>
        <authorList>
            <consortium name="The C. elegans sequencing consortium"/>
        </authorList>
    </citation>
    <scope>NUCLEOTIDE SEQUENCE [LARGE SCALE GENOMIC DNA]</scope>
    <source>
        <strain>Bristol N2</strain>
    </source>
</reference>
<reference key="2">
    <citation type="journal article" date="2005" name="J. Biol. Chem.">
        <title>Roles of the HIF-1 hypoxia-inducible factor during hypoxia response in Caenorhabditis elegans.</title>
        <authorList>
            <person name="Shen C."/>
            <person name="Nettleton D."/>
            <person name="Jiang M."/>
            <person name="Kim S.K."/>
            <person name="Powell-Coffman J.A."/>
        </authorList>
    </citation>
    <scope>FUNCTION</scope>
</reference>
<accession>Q19408</accession>
<protein>
    <recommendedName>
        <fullName>Fungus-induced-related protein 15</fullName>
    </recommendedName>
</protein>